<proteinExistence type="evidence at protein level"/>
<comment type="function">
    <text evidence="4 5 6 7 8 10 11">Sequence specific transcriptional activator which binds to the PU-box, a purine-rich DNA sequence (5'-GAGGAA-3') that can act as a lymphoid-specific enhancer. Promotes development of plasmacytoid dendritic cells (pDCs), also known as type 2 DC precursors (pre-DC2) or natural interferon (IFN)-producing cells. These cells have the capacity to produce large amounts of interferon and block viral replication. Required for B-cell receptor (BCR) signaling, which is necessary for normal B-cell development and antigenic stimulation.</text>
</comment>
<comment type="subunit">
    <text evidence="2 9">Can form homotypic interactions (By similarity). Interacts with IRF4/Pip (By similarity). Interacts with JUN (By similarity). Interacts with TBP (By similarity). May also interact with CREBBP and EP300 (By similarity). Interacts with NONO/p54(nrb) (PubMed:8626664).</text>
</comment>
<comment type="subcellular location">
    <subcellularLocation>
        <location evidence="2">Nucleus</location>
    </subcellularLocation>
</comment>
<comment type="alternative products">
    <event type="alternative promoter"/>
    <event type="alternative splicing"/>
    <isoform>
        <id>O35906-1</id>
        <name>IA</name>
        <sequence type="displayed"/>
    </isoform>
    <isoform>
        <id>O35906-2</id>
        <name>IC</name>
        <sequence type="described" ref="VSP_013908"/>
    </isoform>
    <isoform>
        <id>O35906-3</id>
        <name>IIA</name>
        <sequence type="described" ref="VSP_013907"/>
    </isoform>
</comment>
<comment type="tissue specificity">
    <text evidence="10">Expressed in the medulla of the thymus, the spleen and germinal centers of the lymph nodes. Expressed in B-cells and T-cells, expression increases during B-cell maturation and decreases during T-cell maturation.</text>
</comment>
<comment type="domain">
    <text evidence="1">The protein contains a weakly acidic N-terminal transactivation domain (TAD) followed by a second TAD rich in proline, serine and threonine. Each of these domains may be required for transcriptional activation of a subset of target genes (By similarity).</text>
</comment>
<comment type="miscellaneous">
    <molecule>Isoform IA</molecule>
    <text>Produced by alternative promoter usage.</text>
</comment>
<comment type="miscellaneous">
    <molecule>Isoform IC</molecule>
    <text evidence="12">Produced by alternative splicing of isoform IA.</text>
</comment>
<comment type="miscellaneous">
    <molecule>Isoform IIA</molecule>
    <text evidence="12">Produced by alternative promoter usage.</text>
</comment>
<comment type="similarity">
    <text evidence="12">Belongs to the ETS family.</text>
</comment>
<evidence type="ECO:0000250" key="1"/>
<evidence type="ECO:0000250" key="2">
    <source>
        <dbReference type="UniProtKB" id="Q01892"/>
    </source>
</evidence>
<evidence type="ECO:0000255" key="3">
    <source>
        <dbReference type="PROSITE-ProRule" id="PRU00237"/>
    </source>
</evidence>
<evidence type="ECO:0000269" key="4">
    <source>
    </source>
</evidence>
<evidence type="ECO:0000269" key="5">
    <source>
    </source>
</evidence>
<evidence type="ECO:0000269" key="6">
    <source>
    </source>
</evidence>
<evidence type="ECO:0000269" key="7">
    <source>
    </source>
</evidence>
<evidence type="ECO:0000269" key="8">
    <source>
    </source>
</evidence>
<evidence type="ECO:0000269" key="9">
    <source>
    </source>
</evidence>
<evidence type="ECO:0000269" key="10">
    <source>
    </source>
</evidence>
<evidence type="ECO:0000269" key="11">
    <source>
    </source>
</evidence>
<evidence type="ECO:0000305" key="12"/>
<feature type="chain" id="PRO_0000204137" description="Transcription factor Spi-B">
    <location>
        <begin position="1"/>
        <end position="267"/>
    </location>
</feature>
<feature type="DNA-binding region" description="ETS" evidence="3">
    <location>
        <begin position="174"/>
        <end position="257"/>
    </location>
</feature>
<feature type="region of interest" description="TAD1 (Acidic)">
    <location>
        <begin position="1"/>
        <end position="31"/>
    </location>
</feature>
<feature type="region of interest" description="TAD2">
    <location>
        <begin position="41"/>
        <end position="62"/>
    </location>
</feature>
<feature type="splice variant" id="VSP_013907" description="In isoform IIA." evidence="12">
    <original>MLALEAAQ</original>
    <variation>MPLCLSPAR</variation>
    <location>
        <begin position="1"/>
        <end position="8"/>
    </location>
</feature>
<feature type="splice variant" id="VSP_013908" description="In isoform IC." evidence="12">
    <original>L</original>
    <variation>LVGEGVSPRPEMTLSSLRQ</variation>
    <location>
        <position position="17"/>
    </location>
</feature>
<dbReference type="EMBL" id="U87619">
    <property type="protein sequence ID" value="AAC53554.1"/>
    <property type="molecule type" value="Genomic_DNA"/>
</dbReference>
<dbReference type="EMBL" id="U87614">
    <property type="protein sequence ID" value="AAC53554.1"/>
    <property type="status" value="JOINED"/>
    <property type="molecule type" value="Genomic_DNA"/>
</dbReference>
<dbReference type="EMBL" id="U87616">
    <property type="protein sequence ID" value="AAC53554.1"/>
    <property type="status" value="JOINED"/>
    <property type="molecule type" value="Genomic_DNA"/>
</dbReference>
<dbReference type="EMBL" id="U87617">
    <property type="protein sequence ID" value="AAC53554.1"/>
    <property type="status" value="JOINED"/>
    <property type="molecule type" value="Genomic_DNA"/>
</dbReference>
<dbReference type="EMBL" id="U87618">
    <property type="protein sequence ID" value="AAC53554.1"/>
    <property type="status" value="JOINED"/>
    <property type="molecule type" value="Genomic_DNA"/>
</dbReference>
<dbReference type="EMBL" id="U87619">
    <property type="protein sequence ID" value="AAC53556.1"/>
    <property type="molecule type" value="Genomic_DNA"/>
</dbReference>
<dbReference type="EMBL" id="U87614">
    <property type="protein sequence ID" value="AAC53556.1"/>
    <property type="status" value="JOINED"/>
    <property type="molecule type" value="Genomic_DNA"/>
</dbReference>
<dbReference type="EMBL" id="U87616">
    <property type="protein sequence ID" value="AAC53556.1"/>
    <property type="status" value="JOINED"/>
    <property type="molecule type" value="Genomic_DNA"/>
</dbReference>
<dbReference type="EMBL" id="U87617">
    <property type="protein sequence ID" value="AAC53556.1"/>
    <property type="status" value="JOINED"/>
    <property type="molecule type" value="Genomic_DNA"/>
</dbReference>
<dbReference type="EMBL" id="U87618">
    <property type="protein sequence ID" value="AAC53556.1"/>
    <property type="status" value="JOINED"/>
    <property type="molecule type" value="Genomic_DNA"/>
</dbReference>
<dbReference type="EMBL" id="U87619">
    <property type="protein sequence ID" value="AAC53557.1"/>
    <property type="molecule type" value="Genomic_DNA"/>
</dbReference>
<dbReference type="EMBL" id="U87616">
    <property type="protein sequence ID" value="AAC53557.1"/>
    <property type="status" value="JOINED"/>
    <property type="molecule type" value="Genomic_DNA"/>
</dbReference>
<dbReference type="EMBL" id="U87617">
    <property type="protein sequence ID" value="AAC53557.1"/>
    <property type="status" value="JOINED"/>
    <property type="molecule type" value="Genomic_DNA"/>
</dbReference>
<dbReference type="EMBL" id="U87618">
    <property type="protein sequence ID" value="AAC53557.1"/>
    <property type="status" value="JOINED"/>
    <property type="molecule type" value="Genomic_DNA"/>
</dbReference>
<dbReference type="EMBL" id="U87620">
    <property type="protein sequence ID" value="AAC53559.1"/>
    <property type="molecule type" value="Genomic_DNA"/>
</dbReference>
<dbReference type="CCDS" id="CCDS21209.1">
    <molecule id="O35906-1"/>
</dbReference>
<dbReference type="RefSeq" id="NP_063919.1">
    <molecule id="O35906-1"/>
    <property type="nucleotide sequence ID" value="NM_019866.1"/>
</dbReference>
<dbReference type="RefSeq" id="XP_006540996.1">
    <molecule id="O35906-2"/>
    <property type="nucleotide sequence ID" value="XM_006540933.3"/>
</dbReference>
<dbReference type="RefSeq" id="XP_006540998.1">
    <molecule id="O35906-3"/>
    <property type="nucleotide sequence ID" value="XM_006540935.5"/>
</dbReference>
<dbReference type="SMR" id="O35906"/>
<dbReference type="FunCoup" id="O35906">
    <property type="interactions" value="120"/>
</dbReference>
<dbReference type="STRING" id="10090.ENSMUSP00000035539"/>
<dbReference type="PaxDb" id="10090-ENSMUSP00000096084"/>
<dbReference type="ProteomicsDB" id="258587">
    <molecule id="O35906-3"/>
</dbReference>
<dbReference type="DNASU" id="272382"/>
<dbReference type="Ensembl" id="ENSMUST00000035323.6">
    <molecule id="O35906-1"/>
    <property type="protein sequence ID" value="ENSMUSP00000035539.5"/>
    <property type="gene ID" value="ENSMUSG00000008193.14"/>
</dbReference>
<dbReference type="GeneID" id="272382"/>
<dbReference type="KEGG" id="mmu:272382"/>
<dbReference type="UCSC" id="uc009gpw.1">
    <molecule id="O35906-1"/>
    <property type="organism name" value="mouse"/>
</dbReference>
<dbReference type="AGR" id="MGI:892986"/>
<dbReference type="CTD" id="6689"/>
<dbReference type="MGI" id="MGI:892986">
    <property type="gene designation" value="Spib"/>
</dbReference>
<dbReference type="VEuPathDB" id="HostDB:ENSMUSG00000008193"/>
<dbReference type="eggNOG" id="KOG3805">
    <property type="taxonomic scope" value="Eukaryota"/>
</dbReference>
<dbReference type="GeneTree" id="ENSGT00940000162754"/>
<dbReference type="HOGENOM" id="CLU_066451_2_0_1"/>
<dbReference type="InParanoid" id="O35906"/>
<dbReference type="OMA" id="CKHPSYP"/>
<dbReference type="OrthoDB" id="10043646at2759"/>
<dbReference type="PhylomeDB" id="O35906"/>
<dbReference type="TreeFam" id="TF352494"/>
<dbReference type="BioGRID-ORCS" id="272382">
    <property type="hits" value="2 hits in 78 CRISPR screens"/>
</dbReference>
<dbReference type="PRO" id="PR:O35906"/>
<dbReference type="Proteomes" id="UP000000589">
    <property type="component" value="Chromosome 7"/>
</dbReference>
<dbReference type="RNAct" id="O35906">
    <property type="molecule type" value="protein"/>
</dbReference>
<dbReference type="Bgee" id="ENSMUSG00000008193">
    <property type="expression patterns" value="Expressed in peripheral lymph node and 60 other cell types or tissues"/>
</dbReference>
<dbReference type="ExpressionAtlas" id="O35906">
    <property type="expression patterns" value="baseline and differential"/>
</dbReference>
<dbReference type="GO" id="GO:0005634">
    <property type="term" value="C:nucleus"/>
    <property type="evidence" value="ECO:0007669"/>
    <property type="project" value="UniProtKB-SubCell"/>
</dbReference>
<dbReference type="GO" id="GO:0005667">
    <property type="term" value="C:transcription regulator complex"/>
    <property type="evidence" value="ECO:0000305"/>
    <property type="project" value="MGI"/>
</dbReference>
<dbReference type="GO" id="GO:0001228">
    <property type="term" value="F:DNA-binding transcription activator activity, RNA polymerase II-specific"/>
    <property type="evidence" value="ECO:0007669"/>
    <property type="project" value="Ensembl"/>
</dbReference>
<dbReference type="GO" id="GO:0003700">
    <property type="term" value="F:DNA-binding transcription factor activity"/>
    <property type="evidence" value="ECO:0000314"/>
    <property type="project" value="MGI"/>
</dbReference>
<dbReference type="GO" id="GO:0000978">
    <property type="term" value="F:RNA polymerase II cis-regulatory region sequence-specific DNA binding"/>
    <property type="evidence" value="ECO:0007669"/>
    <property type="project" value="Ensembl"/>
</dbReference>
<dbReference type="GO" id="GO:0002327">
    <property type="term" value="P:immature B cell differentiation"/>
    <property type="evidence" value="ECO:0000316"/>
    <property type="project" value="ARUK-UCL"/>
</dbReference>
<dbReference type="GO" id="GO:0030225">
    <property type="term" value="P:macrophage differentiation"/>
    <property type="evidence" value="ECO:0000314"/>
    <property type="project" value="MGI"/>
</dbReference>
<dbReference type="GO" id="GO:0006355">
    <property type="term" value="P:regulation of DNA-templated transcription"/>
    <property type="evidence" value="ECO:0000314"/>
    <property type="project" value="MGI"/>
</dbReference>
<dbReference type="FunFam" id="1.10.10.10:FF:000250">
    <property type="entry name" value="transcription factor Spi-B isoform X1"/>
    <property type="match status" value="1"/>
</dbReference>
<dbReference type="Gene3D" id="1.10.10.10">
    <property type="entry name" value="Winged helix-like DNA-binding domain superfamily/Winged helix DNA-binding domain"/>
    <property type="match status" value="1"/>
</dbReference>
<dbReference type="InterPro" id="IPR000418">
    <property type="entry name" value="Ets_dom"/>
</dbReference>
<dbReference type="InterPro" id="IPR046328">
    <property type="entry name" value="ETS_fam"/>
</dbReference>
<dbReference type="InterPro" id="IPR036388">
    <property type="entry name" value="WH-like_DNA-bd_sf"/>
</dbReference>
<dbReference type="InterPro" id="IPR036390">
    <property type="entry name" value="WH_DNA-bd_sf"/>
</dbReference>
<dbReference type="PANTHER" id="PTHR11849">
    <property type="entry name" value="ETS"/>
    <property type="match status" value="1"/>
</dbReference>
<dbReference type="PANTHER" id="PTHR11849:SF174">
    <property type="entry name" value="TRANSCRIPTION FACTOR SPI-B"/>
    <property type="match status" value="1"/>
</dbReference>
<dbReference type="Pfam" id="PF00178">
    <property type="entry name" value="Ets"/>
    <property type="match status" value="1"/>
</dbReference>
<dbReference type="PRINTS" id="PR00454">
    <property type="entry name" value="ETSDOMAIN"/>
</dbReference>
<dbReference type="SMART" id="SM00413">
    <property type="entry name" value="ETS"/>
    <property type="match status" value="1"/>
</dbReference>
<dbReference type="SUPFAM" id="SSF46785">
    <property type="entry name" value="Winged helix' DNA-binding domain"/>
    <property type="match status" value="1"/>
</dbReference>
<dbReference type="PROSITE" id="PS00345">
    <property type="entry name" value="ETS_DOMAIN_1"/>
    <property type="match status" value="1"/>
</dbReference>
<dbReference type="PROSITE" id="PS00346">
    <property type="entry name" value="ETS_DOMAIN_2"/>
    <property type="match status" value="1"/>
</dbReference>
<dbReference type="PROSITE" id="PS50061">
    <property type="entry name" value="ETS_DOMAIN_3"/>
    <property type="match status" value="1"/>
</dbReference>
<organism>
    <name type="scientific">Mus musculus</name>
    <name type="common">Mouse</name>
    <dbReference type="NCBI Taxonomy" id="10090"/>
    <lineage>
        <taxon>Eukaryota</taxon>
        <taxon>Metazoa</taxon>
        <taxon>Chordata</taxon>
        <taxon>Craniata</taxon>
        <taxon>Vertebrata</taxon>
        <taxon>Euteleostomi</taxon>
        <taxon>Mammalia</taxon>
        <taxon>Eutheria</taxon>
        <taxon>Euarchontoglires</taxon>
        <taxon>Glires</taxon>
        <taxon>Rodentia</taxon>
        <taxon>Myomorpha</taxon>
        <taxon>Muroidea</taxon>
        <taxon>Muridae</taxon>
        <taxon>Murinae</taxon>
        <taxon>Mus</taxon>
        <taxon>Mus</taxon>
    </lineage>
</organism>
<keyword id="KW-0010">Activator</keyword>
<keyword id="KW-0877">Alternative promoter usage</keyword>
<keyword id="KW-0025">Alternative splicing</keyword>
<keyword id="KW-0238">DNA-binding</keyword>
<keyword id="KW-0539">Nucleus</keyword>
<keyword id="KW-1185">Reference proteome</keyword>
<keyword id="KW-0804">Transcription</keyword>
<keyword id="KW-0805">Transcription regulation</keyword>
<protein>
    <recommendedName>
        <fullName>Transcription factor Spi-B</fullName>
    </recommendedName>
</protein>
<accession>O35906</accession>
<accession>O35907</accession>
<accession>O35909</accession>
<accession>O55199</accession>
<name>SPIB_MOUSE</name>
<sequence>MLALEAAQLDGPHLSCLYPEGVFYDLDSCKPFSYPDSDGGLDSTWGWTEAPPAPAIAPYEAFDPATAAFSHSQTVQLCYSHGPNPSTYSPMGTLDPAPSLEAPGPGLQVYPPEDFTSQTLGSLAYAPYPSPVLSEEEDIMLDSPALEVSDSESDEALLAGSEGRGSEAGARKKLRLYQFLLGLLLRGDMRECVWWVEPGAGVFQFSSKHKELLARRWGQQKGNRKRMTYQKLARALRNYAKTGEIRKVKRKLTYQFDSALLPASRHV</sequence>
<reference key="1">
    <citation type="journal article" date="1998" name="Gene">
        <title>Two promoters direct expression of the murine Spi-B gene, an Ets family transcription factor.</title>
        <authorList>
            <person name="Chen H.-M."/>
            <person name="Gonzalez D.A."/>
            <person name="Radomska H.S."/>
            <person name="Voso M.T."/>
            <person name="Sun Z."/>
            <person name="Zhang P."/>
            <person name="Zhang D.-E."/>
            <person name="Tenen D.G."/>
        </authorList>
    </citation>
    <scope>NUCLEOTIDE SEQUENCE [GENOMIC DNA] (ISOFORMS IA; IC AND IIA)</scope>
    <scope>ALTERNATIVE PROMOTER USAGE</scope>
    <source>
        <strain>129/Sv</strain>
    </source>
</reference>
<reference key="2">
    <citation type="journal article" date="1996" name="J. Biol. Chem.">
        <title>The transcription factor Spi-1/PU.1 binds RNA and interferes with the RNA-binding protein p54nrb.</title>
        <authorList>
            <person name="Hallier M."/>
            <person name="Tavitian A."/>
            <person name="Moreau-Gachelin F."/>
        </authorList>
    </citation>
    <scope>INTERACTION WITH NONO</scope>
</reference>
<reference key="3">
    <citation type="journal article" date="1996" name="J. Exp. Med.">
        <title>The Ets protein Spi-B is expressed exclusively in B cells and T cells during development.</title>
        <authorList>
            <person name="Su G.H."/>
            <person name="Ip H.S."/>
            <person name="Cobb B.S."/>
            <person name="Lu M.-M."/>
            <person name="Chen H.-M."/>
            <person name="Simon M.C."/>
        </authorList>
    </citation>
    <scope>FUNCTION</scope>
    <scope>TISSUE SPECIFICITY</scope>
</reference>
<reference key="4">
    <citation type="journal article" date="1997" name="EMBO J.">
        <title>Defective B cell receptor-mediated responses in mice lacking the Ets protein, Spi-B.</title>
        <authorList>
            <person name="Su G.H."/>
            <person name="Chen H.-M."/>
            <person name="Muthusamy N."/>
            <person name="Garrett-Sinha L.A."/>
            <person name="Baunoch D."/>
            <person name="Tenen D.G."/>
            <person name="Simon M.C."/>
        </authorList>
    </citation>
    <scope>FUNCTION</scope>
</reference>
<reference key="5">
    <citation type="journal article" date="1999" name="Immunity">
        <title>PU.1 and Spi-B are required for normal B cell receptor-mediated signal transduction.</title>
        <authorList>
            <person name="Garrett-Sinha L.A."/>
            <person name="Su G.H."/>
            <person name="Rao S."/>
            <person name="Kabak S."/>
            <person name="Hao Z."/>
            <person name="Clark M.R."/>
            <person name="Simon M.C."/>
        </authorList>
    </citation>
    <scope>FUNCTION</scope>
</reference>
<reference key="6">
    <citation type="journal article" date="2001" name="Blood">
        <title>PU.1 exhibits partial functional redundancy with Spi-B, but not with Ets-1 or Elf-1.</title>
        <authorList>
            <person name="Garrett-Sinha L.A."/>
            <person name="Dahl R."/>
            <person name="Rao S."/>
            <person name="Barton K.P."/>
            <person name="Simon M.C."/>
        </authorList>
    </citation>
    <scope>FUNCTION</scope>
</reference>
<reference key="7">
    <citation type="journal article" date="2001" name="Immunity">
        <title>PU.1/Spi-B regulation of c-rel is essential for mature B cell survival.</title>
        <authorList>
            <person name="Hu C.-J."/>
            <person name="Rao S."/>
            <person name="Ramirez-Bergeron D.L."/>
            <person name="Garrett-Sinha L.A."/>
            <person name="Gerondakis S."/>
            <person name="Clark M.R."/>
            <person name="Simon M.C."/>
        </authorList>
    </citation>
    <scope>FUNCTION</scope>
</reference>
<reference key="8">
    <citation type="journal article" date="2002" name="EMBO J.">
        <title>Spi-B can functionally replace PU.1 in myeloid but not lymphoid development.</title>
        <authorList>
            <person name="Dahl R."/>
            <person name="Ramirez-Bergeron D.L."/>
            <person name="Rao S."/>
            <person name="Simon M.C."/>
        </authorList>
    </citation>
    <scope>FUNCTION</scope>
</reference>
<reference key="9">
    <citation type="journal article" date="2003" name="Mol. Immunol.">
        <title>The transcription factor Spi-B is not required for somatic hypermutation.</title>
        <authorList>
            <person name="Kim N."/>
            <person name="Martin T.E."/>
            <person name="Simon M.C."/>
            <person name="Storb U."/>
        </authorList>
    </citation>
    <scope>FUNCTION</scope>
</reference>
<gene>
    <name type="primary">Spib</name>
</gene>